<reference key="1">
    <citation type="journal article" date="2008" name="PLoS ONE">
        <title>Genome sequence of the saprophyte Leptospira biflexa provides insights into the evolution of Leptospira and the pathogenesis of leptospirosis.</title>
        <authorList>
            <person name="Picardeau M."/>
            <person name="Bulach D.M."/>
            <person name="Bouchier C."/>
            <person name="Zuerner R.L."/>
            <person name="Zidane N."/>
            <person name="Wilson P.J."/>
            <person name="Creno S."/>
            <person name="Kuczek E.S."/>
            <person name="Bommezzadri S."/>
            <person name="Davis J.C."/>
            <person name="McGrath A."/>
            <person name="Johnson M.J."/>
            <person name="Boursaux-Eude C."/>
            <person name="Seemann T."/>
            <person name="Rouy Z."/>
            <person name="Coppel R.L."/>
            <person name="Rood J.I."/>
            <person name="Lajus A."/>
            <person name="Davies J.K."/>
            <person name="Medigue C."/>
            <person name="Adler B."/>
        </authorList>
    </citation>
    <scope>NUCLEOTIDE SEQUENCE [LARGE SCALE GENOMIC DNA]</scope>
    <source>
        <strain>Patoc 1 / Ames</strain>
    </source>
</reference>
<gene>
    <name evidence="1" type="primary">atpA</name>
    <name type="ordered locus">LBF_0776</name>
</gene>
<comment type="function">
    <text evidence="1">Produces ATP from ADP in the presence of a proton gradient across the membrane. The alpha chain is a regulatory subunit.</text>
</comment>
<comment type="catalytic activity">
    <reaction evidence="1">
        <text>ATP + H2O + 4 H(+)(in) = ADP + phosphate + 5 H(+)(out)</text>
        <dbReference type="Rhea" id="RHEA:57720"/>
        <dbReference type="ChEBI" id="CHEBI:15377"/>
        <dbReference type="ChEBI" id="CHEBI:15378"/>
        <dbReference type="ChEBI" id="CHEBI:30616"/>
        <dbReference type="ChEBI" id="CHEBI:43474"/>
        <dbReference type="ChEBI" id="CHEBI:456216"/>
        <dbReference type="EC" id="7.1.2.2"/>
    </reaction>
</comment>
<comment type="subunit">
    <text evidence="1">F-type ATPases have 2 components, CF(1) - the catalytic core - and CF(0) - the membrane proton channel. CF(1) has five subunits: alpha(3), beta(3), gamma(1), delta(1), epsilon(1). CF(0) has three main subunits: a(1), b(2) and c(9-12). The alpha and beta chains form an alternating ring which encloses part of the gamma chain. CF(1) is attached to CF(0) by a central stalk formed by the gamma and epsilon chains, while a peripheral stalk is formed by the delta and b chains.</text>
</comment>
<comment type="subcellular location">
    <subcellularLocation>
        <location evidence="1">Cell inner membrane</location>
        <topology evidence="1">Peripheral membrane protein</topology>
    </subcellularLocation>
</comment>
<comment type="similarity">
    <text evidence="1">Belongs to the ATPase alpha/beta chains family.</text>
</comment>
<accession>B0SDA3</accession>
<evidence type="ECO:0000255" key="1">
    <source>
        <dbReference type="HAMAP-Rule" id="MF_01346"/>
    </source>
</evidence>
<name>ATPA_LEPBA</name>
<proteinExistence type="inferred from homology"/>
<protein>
    <recommendedName>
        <fullName evidence="1">ATP synthase subunit alpha</fullName>
        <ecNumber evidence="1">7.1.2.2</ecNumber>
    </recommendedName>
    <alternativeName>
        <fullName evidence="1">ATP synthase F1 sector subunit alpha</fullName>
    </alternativeName>
    <alternativeName>
        <fullName evidence="1">F-ATPase subunit alpha</fullName>
    </alternativeName>
</protein>
<organism>
    <name type="scientific">Leptospira biflexa serovar Patoc (strain Patoc 1 / Ames)</name>
    <dbReference type="NCBI Taxonomy" id="355278"/>
    <lineage>
        <taxon>Bacteria</taxon>
        <taxon>Pseudomonadati</taxon>
        <taxon>Spirochaetota</taxon>
        <taxon>Spirochaetia</taxon>
        <taxon>Leptospirales</taxon>
        <taxon>Leptospiraceae</taxon>
        <taxon>Leptospira</taxon>
    </lineage>
</organism>
<keyword id="KW-0066">ATP synthesis</keyword>
<keyword id="KW-0067">ATP-binding</keyword>
<keyword id="KW-0997">Cell inner membrane</keyword>
<keyword id="KW-1003">Cell membrane</keyword>
<keyword id="KW-0139">CF(1)</keyword>
<keyword id="KW-0375">Hydrogen ion transport</keyword>
<keyword id="KW-0406">Ion transport</keyword>
<keyword id="KW-0472">Membrane</keyword>
<keyword id="KW-0547">Nucleotide-binding</keyword>
<keyword id="KW-1278">Translocase</keyword>
<keyword id="KW-0813">Transport</keyword>
<feature type="chain" id="PRO_1000143400" description="ATP synthase subunit alpha">
    <location>
        <begin position="1"/>
        <end position="504"/>
    </location>
</feature>
<feature type="binding site" evidence="1">
    <location>
        <begin position="169"/>
        <end position="176"/>
    </location>
    <ligand>
        <name>ATP</name>
        <dbReference type="ChEBI" id="CHEBI:30616"/>
    </ligand>
</feature>
<feature type="site" description="Required for activity" evidence="1">
    <location>
        <position position="363"/>
    </location>
</feature>
<sequence>MKIKTDEVTSVLKQEIKNFKKDLQVEEVGTVLEVGDGIARVYGLTNVMSGELVEFQNGVRGQAFNLEENSVGVVIFGDYIKIEEGFSVKRVGKIFEVPVGPELLGRVLNPLGEVIDGKGPLNAKKTRPVESPAPGIAMRKSVHEPMQTGIKAIDAMIPIGRGQRELIIGDRGTGKTSIAIDTIINQKGKGVICVYVAIGQKASTVASTIEMLREKGALEYTIIVSANASEPAPMLYIAPYSGATMAEYFMYEEGKATLVVYDDLSKQAVAYRQMSLLLRRPPGREAYPGDVFYLHSRLLERAAKLDDKFGGGSMTALPIIETQEGEVSAYIPTNVISITDGQIYLQSNLFASGLRPAVDVGISVSRVGSAAQIKAMKKVAGTLKSDLAQFRDLEAFAQLGTELDPVTQAQLDRGYRVLEILKQPNNSPTPVEEQVISIFAVTKGFMDVVPTAKVREFEAFLLKTMREQHPEILEEIRTAKEVKQEAALQKTIKSIVEHFLAKNN</sequence>
<dbReference type="EC" id="7.1.2.2" evidence="1"/>
<dbReference type="EMBL" id="CP000777">
    <property type="protein sequence ID" value="ABZ93308.1"/>
    <property type="molecule type" value="Genomic_DNA"/>
</dbReference>
<dbReference type="RefSeq" id="WP_012387818.1">
    <property type="nucleotide sequence ID" value="NC_010842.1"/>
</dbReference>
<dbReference type="SMR" id="B0SDA3"/>
<dbReference type="KEGG" id="lbf:LBF_0776"/>
<dbReference type="HOGENOM" id="CLU_010091_2_1_12"/>
<dbReference type="GO" id="GO:0005886">
    <property type="term" value="C:plasma membrane"/>
    <property type="evidence" value="ECO:0007669"/>
    <property type="project" value="UniProtKB-SubCell"/>
</dbReference>
<dbReference type="GO" id="GO:0045259">
    <property type="term" value="C:proton-transporting ATP synthase complex"/>
    <property type="evidence" value="ECO:0007669"/>
    <property type="project" value="UniProtKB-KW"/>
</dbReference>
<dbReference type="GO" id="GO:0043531">
    <property type="term" value="F:ADP binding"/>
    <property type="evidence" value="ECO:0007669"/>
    <property type="project" value="TreeGrafter"/>
</dbReference>
<dbReference type="GO" id="GO:0005524">
    <property type="term" value="F:ATP binding"/>
    <property type="evidence" value="ECO:0007669"/>
    <property type="project" value="UniProtKB-UniRule"/>
</dbReference>
<dbReference type="GO" id="GO:0046933">
    <property type="term" value="F:proton-transporting ATP synthase activity, rotational mechanism"/>
    <property type="evidence" value="ECO:0007669"/>
    <property type="project" value="UniProtKB-UniRule"/>
</dbReference>
<dbReference type="CDD" id="cd18113">
    <property type="entry name" value="ATP-synt_F1_alpha_C"/>
    <property type="match status" value="1"/>
</dbReference>
<dbReference type="CDD" id="cd18116">
    <property type="entry name" value="ATP-synt_F1_alpha_N"/>
    <property type="match status" value="1"/>
</dbReference>
<dbReference type="CDD" id="cd01132">
    <property type="entry name" value="F1-ATPase_alpha_CD"/>
    <property type="match status" value="1"/>
</dbReference>
<dbReference type="FunFam" id="1.20.150.20:FF:000001">
    <property type="entry name" value="ATP synthase subunit alpha"/>
    <property type="match status" value="1"/>
</dbReference>
<dbReference type="FunFam" id="2.40.30.20:FF:000001">
    <property type="entry name" value="ATP synthase subunit alpha"/>
    <property type="match status" value="1"/>
</dbReference>
<dbReference type="FunFam" id="3.40.50.300:FF:000002">
    <property type="entry name" value="ATP synthase subunit alpha"/>
    <property type="match status" value="1"/>
</dbReference>
<dbReference type="Gene3D" id="2.40.30.20">
    <property type="match status" value="1"/>
</dbReference>
<dbReference type="Gene3D" id="1.20.150.20">
    <property type="entry name" value="ATP synthase alpha/beta chain, C-terminal domain"/>
    <property type="match status" value="1"/>
</dbReference>
<dbReference type="Gene3D" id="3.40.50.300">
    <property type="entry name" value="P-loop containing nucleotide triphosphate hydrolases"/>
    <property type="match status" value="1"/>
</dbReference>
<dbReference type="HAMAP" id="MF_01346">
    <property type="entry name" value="ATP_synth_alpha_bact"/>
    <property type="match status" value="1"/>
</dbReference>
<dbReference type="InterPro" id="IPR023366">
    <property type="entry name" value="ATP_synth_asu-like_sf"/>
</dbReference>
<dbReference type="InterPro" id="IPR000793">
    <property type="entry name" value="ATP_synth_asu_C"/>
</dbReference>
<dbReference type="InterPro" id="IPR038376">
    <property type="entry name" value="ATP_synth_asu_C_sf"/>
</dbReference>
<dbReference type="InterPro" id="IPR033732">
    <property type="entry name" value="ATP_synth_F1_a_nt-bd_dom"/>
</dbReference>
<dbReference type="InterPro" id="IPR005294">
    <property type="entry name" value="ATP_synth_F1_asu"/>
</dbReference>
<dbReference type="InterPro" id="IPR020003">
    <property type="entry name" value="ATPase_a/bsu_AS"/>
</dbReference>
<dbReference type="InterPro" id="IPR004100">
    <property type="entry name" value="ATPase_F1/V1/A1_a/bsu_N"/>
</dbReference>
<dbReference type="InterPro" id="IPR036121">
    <property type="entry name" value="ATPase_F1/V1/A1_a/bsu_N_sf"/>
</dbReference>
<dbReference type="InterPro" id="IPR000194">
    <property type="entry name" value="ATPase_F1/V1/A1_a/bsu_nucl-bd"/>
</dbReference>
<dbReference type="InterPro" id="IPR027417">
    <property type="entry name" value="P-loop_NTPase"/>
</dbReference>
<dbReference type="NCBIfam" id="TIGR00962">
    <property type="entry name" value="atpA"/>
    <property type="match status" value="1"/>
</dbReference>
<dbReference type="NCBIfam" id="NF009884">
    <property type="entry name" value="PRK13343.1"/>
    <property type="match status" value="1"/>
</dbReference>
<dbReference type="PANTHER" id="PTHR48082">
    <property type="entry name" value="ATP SYNTHASE SUBUNIT ALPHA, MITOCHONDRIAL"/>
    <property type="match status" value="1"/>
</dbReference>
<dbReference type="PANTHER" id="PTHR48082:SF2">
    <property type="entry name" value="ATP SYNTHASE SUBUNIT ALPHA, MITOCHONDRIAL"/>
    <property type="match status" value="1"/>
</dbReference>
<dbReference type="Pfam" id="PF00006">
    <property type="entry name" value="ATP-synt_ab"/>
    <property type="match status" value="1"/>
</dbReference>
<dbReference type="Pfam" id="PF00306">
    <property type="entry name" value="ATP-synt_ab_C"/>
    <property type="match status" value="1"/>
</dbReference>
<dbReference type="Pfam" id="PF02874">
    <property type="entry name" value="ATP-synt_ab_N"/>
    <property type="match status" value="1"/>
</dbReference>
<dbReference type="PIRSF" id="PIRSF039088">
    <property type="entry name" value="F_ATPase_subunit_alpha"/>
    <property type="match status" value="1"/>
</dbReference>
<dbReference type="SUPFAM" id="SSF47917">
    <property type="entry name" value="C-terminal domain of alpha and beta subunits of F1 ATP synthase"/>
    <property type="match status" value="1"/>
</dbReference>
<dbReference type="SUPFAM" id="SSF50615">
    <property type="entry name" value="N-terminal domain of alpha and beta subunits of F1 ATP synthase"/>
    <property type="match status" value="1"/>
</dbReference>
<dbReference type="SUPFAM" id="SSF52540">
    <property type="entry name" value="P-loop containing nucleoside triphosphate hydrolases"/>
    <property type="match status" value="1"/>
</dbReference>
<dbReference type="PROSITE" id="PS00152">
    <property type="entry name" value="ATPASE_ALPHA_BETA"/>
    <property type="match status" value="1"/>
</dbReference>